<proteinExistence type="inferred from homology"/>
<accession>A4G1F1</accession>
<gene>
    <name evidence="1" type="primary">bioB</name>
    <name type="ordered locus">HEAR0102</name>
</gene>
<name>BIOB_HERAR</name>
<feature type="chain" id="PRO_0000381429" description="Biotin synthase">
    <location>
        <begin position="1"/>
        <end position="339"/>
    </location>
</feature>
<feature type="domain" description="Radical SAM core" evidence="2">
    <location>
        <begin position="51"/>
        <end position="278"/>
    </location>
</feature>
<feature type="binding site" evidence="1">
    <location>
        <position position="66"/>
    </location>
    <ligand>
        <name>[4Fe-4S] cluster</name>
        <dbReference type="ChEBI" id="CHEBI:49883"/>
        <note>4Fe-4S-S-AdoMet</note>
    </ligand>
</feature>
<feature type="binding site" evidence="1">
    <location>
        <position position="70"/>
    </location>
    <ligand>
        <name>[4Fe-4S] cluster</name>
        <dbReference type="ChEBI" id="CHEBI:49883"/>
        <note>4Fe-4S-S-AdoMet</note>
    </ligand>
</feature>
<feature type="binding site" evidence="1">
    <location>
        <position position="73"/>
    </location>
    <ligand>
        <name>[4Fe-4S] cluster</name>
        <dbReference type="ChEBI" id="CHEBI:49883"/>
        <note>4Fe-4S-S-AdoMet</note>
    </ligand>
</feature>
<feature type="binding site" evidence="1">
    <location>
        <position position="110"/>
    </location>
    <ligand>
        <name>[2Fe-2S] cluster</name>
        <dbReference type="ChEBI" id="CHEBI:190135"/>
    </ligand>
</feature>
<feature type="binding site" evidence="1">
    <location>
        <position position="141"/>
    </location>
    <ligand>
        <name>[2Fe-2S] cluster</name>
        <dbReference type="ChEBI" id="CHEBI:190135"/>
    </ligand>
</feature>
<feature type="binding site" evidence="1">
    <location>
        <position position="201"/>
    </location>
    <ligand>
        <name>[2Fe-2S] cluster</name>
        <dbReference type="ChEBI" id="CHEBI:190135"/>
    </ligand>
</feature>
<feature type="binding site" evidence="1">
    <location>
        <position position="273"/>
    </location>
    <ligand>
        <name>[2Fe-2S] cluster</name>
        <dbReference type="ChEBI" id="CHEBI:190135"/>
    </ligand>
</feature>
<evidence type="ECO:0000255" key="1">
    <source>
        <dbReference type="HAMAP-Rule" id="MF_01694"/>
    </source>
</evidence>
<evidence type="ECO:0000255" key="2">
    <source>
        <dbReference type="PROSITE-ProRule" id="PRU01266"/>
    </source>
</evidence>
<dbReference type="EC" id="2.8.1.6" evidence="1"/>
<dbReference type="EMBL" id="CU207211">
    <property type="protein sequence ID" value="CAL60338.1"/>
    <property type="molecule type" value="Genomic_DNA"/>
</dbReference>
<dbReference type="SMR" id="A4G1F1"/>
<dbReference type="STRING" id="204773.HEAR0102"/>
<dbReference type="KEGG" id="har:HEAR0102"/>
<dbReference type="eggNOG" id="COG0502">
    <property type="taxonomic scope" value="Bacteria"/>
</dbReference>
<dbReference type="HOGENOM" id="CLU_033172_1_2_4"/>
<dbReference type="OrthoDB" id="9786826at2"/>
<dbReference type="UniPathway" id="UPA00078">
    <property type="reaction ID" value="UER00162"/>
</dbReference>
<dbReference type="Proteomes" id="UP000006697">
    <property type="component" value="Chromosome"/>
</dbReference>
<dbReference type="GO" id="GO:0051537">
    <property type="term" value="F:2 iron, 2 sulfur cluster binding"/>
    <property type="evidence" value="ECO:0007669"/>
    <property type="project" value="UniProtKB-KW"/>
</dbReference>
<dbReference type="GO" id="GO:0051539">
    <property type="term" value="F:4 iron, 4 sulfur cluster binding"/>
    <property type="evidence" value="ECO:0007669"/>
    <property type="project" value="UniProtKB-KW"/>
</dbReference>
<dbReference type="GO" id="GO:0004076">
    <property type="term" value="F:biotin synthase activity"/>
    <property type="evidence" value="ECO:0007669"/>
    <property type="project" value="UniProtKB-UniRule"/>
</dbReference>
<dbReference type="GO" id="GO:0005506">
    <property type="term" value="F:iron ion binding"/>
    <property type="evidence" value="ECO:0007669"/>
    <property type="project" value="UniProtKB-UniRule"/>
</dbReference>
<dbReference type="GO" id="GO:0009102">
    <property type="term" value="P:biotin biosynthetic process"/>
    <property type="evidence" value="ECO:0007669"/>
    <property type="project" value="UniProtKB-UniRule"/>
</dbReference>
<dbReference type="CDD" id="cd01335">
    <property type="entry name" value="Radical_SAM"/>
    <property type="match status" value="1"/>
</dbReference>
<dbReference type="FunFam" id="3.20.20.70:FF:000011">
    <property type="entry name" value="Biotin synthase"/>
    <property type="match status" value="1"/>
</dbReference>
<dbReference type="Gene3D" id="3.20.20.70">
    <property type="entry name" value="Aldolase class I"/>
    <property type="match status" value="1"/>
</dbReference>
<dbReference type="HAMAP" id="MF_01694">
    <property type="entry name" value="BioB"/>
    <property type="match status" value="1"/>
</dbReference>
<dbReference type="InterPro" id="IPR013785">
    <property type="entry name" value="Aldolase_TIM"/>
</dbReference>
<dbReference type="InterPro" id="IPR010722">
    <property type="entry name" value="BATS_dom"/>
</dbReference>
<dbReference type="InterPro" id="IPR002684">
    <property type="entry name" value="Biotin_synth/BioAB"/>
</dbReference>
<dbReference type="InterPro" id="IPR024177">
    <property type="entry name" value="Biotin_synthase"/>
</dbReference>
<dbReference type="InterPro" id="IPR006638">
    <property type="entry name" value="Elp3/MiaA/NifB-like_rSAM"/>
</dbReference>
<dbReference type="InterPro" id="IPR007197">
    <property type="entry name" value="rSAM"/>
</dbReference>
<dbReference type="NCBIfam" id="TIGR00433">
    <property type="entry name" value="bioB"/>
    <property type="match status" value="1"/>
</dbReference>
<dbReference type="PANTHER" id="PTHR22976">
    <property type="entry name" value="BIOTIN SYNTHASE"/>
    <property type="match status" value="1"/>
</dbReference>
<dbReference type="PANTHER" id="PTHR22976:SF2">
    <property type="entry name" value="BIOTIN SYNTHASE, MITOCHONDRIAL"/>
    <property type="match status" value="1"/>
</dbReference>
<dbReference type="Pfam" id="PF06968">
    <property type="entry name" value="BATS"/>
    <property type="match status" value="1"/>
</dbReference>
<dbReference type="Pfam" id="PF04055">
    <property type="entry name" value="Radical_SAM"/>
    <property type="match status" value="1"/>
</dbReference>
<dbReference type="PIRSF" id="PIRSF001619">
    <property type="entry name" value="Biotin_synth"/>
    <property type="match status" value="1"/>
</dbReference>
<dbReference type="SFLD" id="SFLDF00272">
    <property type="entry name" value="biotin_synthase"/>
    <property type="match status" value="1"/>
</dbReference>
<dbReference type="SFLD" id="SFLDS00029">
    <property type="entry name" value="Radical_SAM"/>
    <property type="match status" value="1"/>
</dbReference>
<dbReference type="SMART" id="SM00876">
    <property type="entry name" value="BATS"/>
    <property type="match status" value="1"/>
</dbReference>
<dbReference type="SMART" id="SM00729">
    <property type="entry name" value="Elp3"/>
    <property type="match status" value="1"/>
</dbReference>
<dbReference type="SUPFAM" id="SSF102114">
    <property type="entry name" value="Radical SAM enzymes"/>
    <property type="match status" value="1"/>
</dbReference>
<dbReference type="PROSITE" id="PS51918">
    <property type="entry name" value="RADICAL_SAM"/>
    <property type="match status" value="1"/>
</dbReference>
<sequence>MSSQPVTFQAPVAPIVPTAWPVDDVLALFNLPFNELMFRAQTVHREHFDPSEVELATLLSIKTGGCPEDCGYCPQAARYDTGVTAQKILPLEEVLTAAREAKAHGATRFCMGAAWREPKDRDLEKVEEMVREVKAMGMETCATLGMLGEGQAEKLKNAGLDYYNHNLDTAPEFYSNVISTRDYQNRIDTLARVRNVGIKVCCGGIVGMGESRLQRAGLIAQLCNMDPYPESVPVNNLVQVEGTPLHGTDPIDPLEFVRTVAVARITMPKARVRLSAGRREMGEAIQALCFVAGANSIFYGDKLLTTGNPEALADQELLEKLGMHTRSTAIDARCDVTPS</sequence>
<keyword id="KW-0001">2Fe-2S</keyword>
<keyword id="KW-0004">4Fe-4S</keyword>
<keyword id="KW-0093">Biotin biosynthesis</keyword>
<keyword id="KW-0408">Iron</keyword>
<keyword id="KW-0411">Iron-sulfur</keyword>
<keyword id="KW-0479">Metal-binding</keyword>
<keyword id="KW-1185">Reference proteome</keyword>
<keyword id="KW-0949">S-adenosyl-L-methionine</keyword>
<keyword id="KW-0808">Transferase</keyword>
<protein>
    <recommendedName>
        <fullName evidence="1">Biotin synthase</fullName>
        <ecNumber evidence="1">2.8.1.6</ecNumber>
    </recommendedName>
</protein>
<comment type="function">
    <text evidence="1">Catalyzes the conversion of dethiobiotin (DTB) to biotin by the insertion of a sulfur atom into dethiobiotin via a radical-based mechanism.</text>
</comment>
<comment type="catalytic activity">
    <reaction evidence="1">
        <text>(4R,5S)-dethiobiotin + (sulfur carrier)-SH + 2 reduced [2Fe-2S]-[ferredoxin] + 2 S-adenosyl-L-methionine = (sulfur carrier)-H + biotin + 2 5'-deoxyadenosine + 2 L-methionine + 2 oxidized [2Fe-2S]-[ferredoxin]</text>
        <dbReference type="Rhea" id="RHEA:22060"/>
        <dbReference type="Rhea" id="RHEA-COMP:10000"/>
        <dbReference type="Rhea" id="RHEA-COMP:10001"/>
        <dbReference type="Rhea" id="RHEA-COMP:14737"/>
        <dbReference type="Rhea" id="RHEA-COMP:14739"/>
        <dbReference type="ChEBI" id="CHEBI:17319"/>
        <dbReference type="ChEBI" id="CHEBI:29917"/>
        <dbReference type="ChEBI" id="CHEBI:33737"/>
        <dbReference type="ChEBI" id="CHEBI:33738"/>
        <dbReference type="ChEBI" id="CHEBI:57586"/>
        <dbReference type="ChEBI" id="CHEBI:57844"/>
        <dbReference type="ChEBI" id="CHEBI:59789"/>
        <dbReference type="ChEBI" id="CHEBI:64428"/>
        <dbReference type="ChEBI" id="CHEBI:149473"/>
        <dbReference type="EC" id="2.8.1.6"/>
    </reaction>
</comment>
<comment type="cofactor">
    <cofactor evidence="1">
        <name>[4Fe-4S] cluster</name>
        <dbReference type="ChEBI" id="CHEBI:49883"/>
    </cofactor>
    <text evidence="1">Binds 1 [4Fe-4S] cluster. The cluster is coordinated with 3 cysteines and an exchangeable S-adenosyl-L-methionine.</text>
</comment>
<comment type="cofactor">
    <cofactor evidence="1">
        <name>[2Fe-2S] cluster</name>
        <dbReference type="ChEBI" id="CHEBI:190135"/>
    </cofactor>
    <text evidence="1">Binds 1 [2Fe-2S] cluster. The cluster is coordinated with 3 cysteines and 1 arginine.</text>
</comment>
<comment type="pathway">
    <text evidence="1">Cofactor biosynthesis; biotin biosynthesis; biotin from 7,8-diaminononanoate: step 2/2.</text>
</comment>
<comment type="subunit">
    <text evidence="1">Homodimer.</text>
</comment>
<comment type="similarity">
    <text evidence="1">Belongs to the radical SAM superfamily. Biotin synthase family.</text>
</comment>
<organism>
    <name type="scientific">Herminiimonas arsenicoxydans</name>
    <dbReference type="NCBI Taxonomy" id="204773"/>
    <lineage>
        <taxon>Bacteria</taxon>
        <taxon>Pseudomonadati</taxon>
        <taxon>Pseudomonadota</taxon>
        <taxon>Betaproteobacteria</taxon>
        <taxon>Burkholderiales</taxon>
        <taxon>Oxalobacteraceae</taxon>
        <taxon>Herminiimonas</taxon>
    </lineage>
</organism>
<reference key="1">
    <citation type="journal article" date="2007" name="PLoS Genet.">
        <title>A tale of two oxidation states: bacterial colonization of arsenic-rich environments.</title>
        <authorList>
            <person name="Muller D."/>
            <person name="Medigue C."/>
            <person name="Koechler S."/>
            <person name="Barbe V."/>
            <person name="Barakat M."/>
            <person name="Talla E."/>
            <person name="Bonnefoy V."/>
            <person name="Krin E."/>
            <person name="Arsene-Ploetze F."/>
            <person name="Carapito C."/>
            <person name="Chandler M."/>
            <person name="Cournoyer B."/>
            <person name="Cruveiller S."/>
            <person name="Dossat C."/>
            <person name="Duval S."/>
            <person name="Heymann M."/>
            <person name="Leize E."/>
            <person name="Lieutaud A."/>
            <person name="Lievremont D."/>
            <person name="Makita Y."/>
            <person name="Mangenot S."/>
            <person name="Nitschke W."/>
            <person name="Ortet P."/>
            <person name="Perdrial N."/>
            <person name="Schoepp B."/>
            <person name="Siguier P."/>
            <person name="Simeonova D.D."/>
            <person name="Rouy Z."/>
            <person name="Segurens B."/>
            <person name="Turlin E."/>
            <person name="Vallenet D."/>
            <person name="van Dorsselaer A."/>
            <person name="Weiss S."/>
            <person name="Weissenbach J."/>
            <person name="Lett M.-C."/>
            <person name="Danchin A."/>
            <person name="Bertin P.N."/>
        </authorList>
    </citation>
    <scope>NUCLEOTIDE SEQUENCE [LARGE SCALE GENOMIC DNA]</scope>
    <source>
        <strain>ULPAs1</strain>
    </source>
</reference>